<name>EIF3B_MYCMD</name>
<comment type="function">
    <text evidence="1">RNA-binding component of the eukaryotic translation initiation factor 3 (eIF-3) complex, which is involved in protein synthesis of a specialized repertoire of mRNAs and, together with other initiation factors, stimulates binding of mRNA and methionyl-tRNAi to the 40S ribosome. The eIF-3 complex specifically targets and initiates translation of a subset of mRNAs involved in cell proliferation.</text>
</comment>
<comment type="subunit">
    <text evidence="1">Component of the eukaryotic translation initiation factor 3 (eIF-3) complex.</text>
</comment>
<comment type="subcellular location">
    <subcellularLocation>
        <location evidence="1">Cytoplasm</location>
    </subcellularLocation>
</comment>
<comment type="similarity">
    <text evidence="1">Belongs to the eIF-3 subunit B family.</text>
</comment>
<evidence type="ECO:0000255" key="1">
    <source>
        <dbReference type="HAMAP-Rule" id="MF_03001"/>
    </source>
</evidence>
<gene>
    <name evidence="1" type="primary">PRT1</name>
    <name type="ORF">UMAG_04299</name>
</gene>
<reference key="1">
    <citation type="journal article" date="2006" name="Nature">
        <title>Insights from the genome of the biotrophic fungal plant pathogen Ustilago maydis.</title>
        <authorList>
            <person name="Kaemper J."/>
            <person name="Kahmann R."/>
            <person name="Boelker M."/>
            <person name="Ma L.-J."/>
            <person name="Brefort T."/>
            <person name="Saville B.J."/>
            <person name="Banuett F."/>
            <person name="Kronstad J.W."/>
            <person name="Gold S.E."/>
            <person name="Mueller O."/>
            <person name="Perlin M.H."/>
            <person name="Woesten H.A.B."/>
            <person name="de Vries R."/>
            <person name="Ruiz-Herrera J."/>
            <person name="Reynaga-Pena C.G."/>
            <person name="Snetselaar K."/>
            <person name="McCann M."/>
            <person name="Perez-Martin J."/>
            <person name="Feldbruegge M."/>
            <person name="Basse C.W."/>
            <person name="Steinberg G."/>
            <person name="Ibeas J.I."/>
            <person name="Holloman W."/>
            <person name="Guzman P."/>
            <person name="Farman M.L."/>
            <person name="Stajich J.E."/>
            <person name="Sentandreu R."/>
            <person name="Gonzalez-Prieto J.M."/>
            <person name="Kennell J.C."/>
            <person name="Molina L."/>
            <person name="Schirawski J."/>
            <person name="Mendoza-Mendoza A."/>
            <person name="Greilinger D."/>
            <person name="Muench K."/>
            <person name="Roessel N."/>
            <person name="Scherer M."/>
            <person name="Vranes M."/>
            <person name="Ladendorf O."/>
            <person name="Vincon V."/>
            <person name="Fuchs U."/>
            <person name="Sandrock B."/>
            <person name="Meng S."/>
            <person name="Ho E.C.H."/>
            <person name="Cahill M.J."/>
            <person name="Boyce K.J."/>
            <person name="Klose J."/>
            <person name="Klosterman S.J."/>
            <person name="Deelstra H.J."/>
            <person name="Ortiz-Castellanos L."/>
            <person name="Li W."/>
            <person name="Sanchez-Alonso P."/>
            <person name="Schreier P.H."/>
            <person name="Haeuser-Hahn I."/>
            <person name="Vaupel M."/>
            <person name="Koopmann E."/>
            <person name="Friedrich G."/>
            <person name="Voss H."/>
            <person name="Schlueter T."/>
            <person name="Margolis J."/>
            <person name="Platt D."/>
            <person name="Swimmer C."/>
            <person name="Gnirke A."/>
            <person name="Chen F."/>
            <person name="Vysotskaia V."/>
            <person name="Mannhaupt G."/>
            <person name="Gueldener U."/>
            <person name="Muensterkoetter M."/>
            <person name="Haase D."/>
            <person name="Oesterheld M."/>
            <person name="Mewes H.-W."/>
            <person name="Mauceli E.W."/>
            <person name="DeCaprio D."/>
            <person name="Wade C.M."/>
            <person name="Butler J."/>
            <person name="Young S.K."/>
            <person name="Jaffe D.B."/>
            <person name="Calvo S.E."/>
            <person name="Nusbaum C."/>
            <person name="Galagan J.E."/>
            <person name="Birren B.W."/>
        </authorList>
    </citation>
    <scope>NUCLEOTIDE SEQUENCE [LARGE SCALE GENOMIC DNA]</scope>
    <source>
        <strain>DSM 14603 / FGSC 9021 / UM521</strain>
    </source>
</reference>
<reference key="2">
    <citation type="submission" date="2014-09" db="EMBL/GenBank/DDBJ databases">
        <authorList>
            <person name="Gueldener U."/>
            <person name="Muensterkoetter M."/>
            <person name="Walter M.C."/>
            <person name="Mannhaupt G."/>
            <person name="Kahmann R."/>
        </authorList>
    </citation>
    <scope>GENOME REANNOTATION</scope>
    <source>
        <strain>DSM 14603 / FGSC 9021 / UM521</strain>
    </source>
</reference>
<dbReference type="EMBL" id="CM003151">
    <property type="protein sequence ID" value="KIS67805.1"/>
    <property type="molecule type" value="Genomic_DNA"/>
</dbReference>
<dbReference type="RefSeq" id="XP_011390752.1">
    <property type="nucleotide sequence ID" value="XM_011392450.1"/>
</dbReference>
<dbReference type="SMR" id="Q4P6G4"/>
<dbReference type="FunCoup" id="Q4P6G4">
    <property type="interactions" value="862"/>
</dbReference>
<dbReference type="STRING" id="237631.Q4P6G4"/>
<dbReference type="EnsemblFungi" id="KIS67805">
    <property type="protein sequence ID" value="KIS67805"/>
    <property type="gene ID" value="UMAG_04299"/>
</dbReference>
<dbReference type="GeneID" id="23564523"/>
<dbReference type="KEGG" id="uma:UMAG_04299"/>
<dbReference type="VEuPathDB" id="FungiDB:UMAG_04299"/>
<dbReference type="eggNOG" id="KOG2314">
    <property type="taxonomic scope" value="Eukaryota"/>
</dbReference>
<dbReference type="HOGENOM" id="CLU_011152_4_0_1"/>
<dbReference type="InParanoid" id="Q4P6G4"/>
<dbReference type="OMA" id="LWGGPQF"/>
<dbReference type="OrthoDB" id="10250414at2759"/>
<dbReference type="Proteomes" id="UP000000561">
    <property type="component" value="Chromosome 12"/>
</dbReference>
<dbReference type="GO" id="GO:0010494">
    <property type="term" value="C:cytoplasmic stress granule"/>
    <property type="evidence" value="ECO:0007669"/>
    <property type="project" value="EnsemblFungi"/>
</dbReference>
<dbReference type="GO" id="GO:0016282">
    <property type="term" value="C:eukaryotic 43S preinitiation complex"/>
    <property type="evidence" value="ECO:0007669"/>
    <property type="project" value="UniProtKB-UniRule"/>
</dbReference>
<dbReference type="GO" id="GO:0033290">
    <property type="term" value="C:eukaryotic 48S preinitiation complex"/>
    <property type="evidence" value="ECO:0007669"/>
    <property type="project" value="UniProtKB-UniRule"/>
</dbReference>
<dbReference type="GO" id="GO:0005852">
    <property type="term" value="C:eukaryotic translation initiation factor 3 complex"/>
    <property type="evidence" value="ECO:0000318"/>
    <property type="project" value="GO_Central"/>
</dbReference>
<dbReference type="GO" id="GO:0071540">
    <property type="term" value="C:eukaryotic translation initiation factor 3 complex, eIF3e"/>
    <property type="evidence" value="ECO:0007669"/>
    <property type="project" value="EnsemblFungi"/>
</dbReference>
<dbReference type="GO" id="GO:0071541">
    <property type="term" value="C:eukaryotic translation initiation factor 3 complex, eIF3m"/>
    <property type="evidence" value="ECO:0007669"/>
    <property type="project" value="EnsemblFungi"/>
</dbReference>
<dbReference type="GO" id="GO:0043614">
    <property type="term" value="C:multi-eIF complex"/>
    <property type="evidence" value="ECO:0007669"/>
    <property type="project" value="EnsemblFungi"/>
</dbReference>
<dbReference type="GO" id="GO:0042802">
    <property type="term" value="F:identical protein binding"/>
    <property type="evidence" value="ECO:0007669"/>
    <property type="project" value="EnsemblFungi"/>
</dbReference>
<dbReference type="GO" id="GO:0003723">
    <property type="term" value="F:RNA binding"/>
    <property type="evidence" value="ECO:0007669"/>
    <property type="project" value="UniProtKB-UniRule"/>
</dbReference>
<dbReference type="GO" id="GO:0003743">
    <property type="term" value="F:translation initiation factor activity"/>
    <property type="evidence" value="ECO:0007669"/>
    <property type="project" value="UniProtKB-UniRule"/>
</dbReference>
<dbReference type="GO" id="GO:0031369">
    <property type="term" value="F:translation initiation factor binding"/>
    <property type="evidence" value="ECO:0007669"/>
    <property type="project" value="InterPro"/>
</dbReference>
<dbReference type="GO" id="GO:0001732">
    <property type="term" value="P:formation of cytoplasmic translation initiation complex"/>
    <property type="evidence" value="ECO:0007669"/>
    <property type="project" value="UniProtKB-UniRule"/>
</dbReference>
<dbReference type="GO" id="GO:0006413">
    <property type="term" value="P:translational initiation"/>
    <property type="evidence" value="ECO:0000318"/>
    <property type="project" value="GO_Central"/>
</dbReference>
<dbReference type="CDD" id="cd12278">
    <property type="entry name" value="RRM_eIF3B"/>
    <property type="match status" value="1"/>
</dbReference>
<dbReference type="FunFam" id="2.130.10.10:FF:000947">
    <property type="entry name" value="Eukaryotic translation initiation factor 3 subunit B"/>
    <property type="match status" value="1"/>
</dbReference>
<dbReference type="Gene3D" id="3.30.70.330">
    <property type="match status" value="1"/>
</dbReference>
<dbReference type="Gene3D" id="2.130.10.10">
    <property type="entry name" value="YVTN repeat-like/Quinoprotein amine dehydrogenase"/>
    <property type="match status" value="2"/>
</dbReference>
<dbReference type="HAMAP" id="MF_03001">
    <property type="entry name" value="eIF3b"/>
    <property type="match status" value="1"/>
</dbReference>
<dbReference type="InterPro" id="IPR011400">
    <property type="entry name" value="EIF3B"/>
</dbReference>
<dbReference type="InterPro" id="IPR034363">
    <property type="entry name" value="eIF3B_RRM"/>
</dbReference>
<dbReference type="InterPro" id="IPR012677">
    <property type="entry name" value="Nucleotide-bd_a/b_plait_sf"/>
</dbReference>
<dbReference type="InterPro" id="IPR035979">
    <property type="entry name" value="RBD_domain_sf"/>
</dbReference>
<dbReference type="InterPro" id="IPR000504">
    <property type="entry name" value="RRM_dom"/>
</dbReference>
<dbReference type="InterPro" id="IPR013979">
    <property type="entry name" value="TIF_beta_prop-like"/>
</dbReference>
<dbReference type="InterPro" id="IPR015943">
    <property type="entry name" value="WD40/YVTN_repeat-like_dom_sf"/>
</dbReference>
<dbReference type="PANTHER" id="PTHR14068">
    <property type="entry name" value="EUKARYOTIC TRANSLATION INITIATION FACTOR 3 EIF3 -RELATED"/>
    <property type="match status" value="1"/>
</dbReference>
<dbReference type="PANTHER" id="PTHR14068:SF0">
    <property type="entry name" value="EUKARYOTIC TRANSLATION INITIATION FACTOR 3 SUBUNIT B"/>
    <property type="match status" value="1"/>
</dbReference>
<dbReference type="Pfam" id="PF08662">
    <property type="entry name" value="eIF2A"/>
    <property type="match status" value="1"/>
</dbReference>
<dbReference type="Pfam" id="PF00076">
    <property type="entry name" value="RRM_1"/>
    <property type="match status" value="1"/>
</dbReference>
<dbReference type="PIRSF" id="PIRSF036424">
    <property type="entry name" value="eIF3b"/>
    <property type="match status" value="1"/>
</dbReference>
<dbReference type="SUPFAM" id="SSF82171">
    <property type="entry name" value="DPP6 N-terminal domain-like"/>
    <property type="match status" value="1"/>
</dbReference>
<dbReference type="SUPFAM" id="SSF54928">
    <property type="entry name" value="RNA-binding domain, RBD"/>
    <property type="match status" value="1"/>
</dbReference>
<dbReference type="PROSITE" id="PS50102">
    <property type="entry name" value="RRM"/>
    <property type="match status" value="1"/>
</dbReference>
<accession>Q4P6G4</accession>
<accession>A0A0D1DZ20</accession>
<organism>
    <name type="scientific">Mycosarcoma maydis</name>
    <name type="common">Corn smut fungus</name>
    <name type="synonym">Ustilago maydis</name>
    <dbReference type="NCBI Taxonomy" id="5270"/>
    <lineage>
        <taxon>Eukaryota</taxon>
        <taxon>Fungi</taxon>
        <taxon>Dikarya</taxon>
        <taxon>Basidiomycota</taxon>
        <taxon>Ustilaginomycotina</taxon>
        <taxon>Ustilaginomycetes</taxon>
        <taxon>Ustilaginales</taxon>
        <taxon>Ustilaginaceae</taxon>
        <taxon>Mycosarcoma</taxon>
    </lineage>
</organism>
<sequence length="745" mass="86022">MPSVDEITNGVDELDFVDDADIDFSDIEQKYSVKFDEGLDDVIVIEGVPVITESRQQKLFETIQKRFKTHANIDIAVEGMHIPYADNGESKGYIFVEMASAEDAAQAIRQMDGYAFDKKHRFSVHRFTDVEKFASLSETYEEPQEEEFKPREHLRSWLADPAGRDQLVICRGDDVEIAWHNRSSDPQVEHSRPRWTESYVQWSPLGTFLTTFHRQGIQIWGGPSCERFMRFPHPGARLVDFSPSEKYMVTWSHEPIQVPDNAPIGPQFFGPEDEGNRIAVWEVRTGHLLRSFPVPQDESGQPGQLKGFSWPFLKWSPDDKYCARLNPGQAISVYETPSMGLLEKKSIKIEGVVDFEWCPMGDKDRELAEAAKPNKKARDNMIVYWQPEVANQPARVTVMAVPSRTILRSKNLFNVSDCKLHWHPQGDYLCVKVDRHTKTKKSMFCNLEIFRVREKEFPVEVVELKDAVTAFAWEPFGTHFALISSNDPQLGTPASGITIKTQLNFYHLHPKGDFRPLKVFDNKTANTLFWSPRGRHIVVATLGSSQKFDLEWYDVDFMHEVRQGNPSADPADDVKLIGTGEHYGITDLEWDPSGRYVATSASVWRHSLENGFAIWDFKGQELQKHIQDRFKQILWRPRPRTLLGKDEQKRVRKNLREYSKQFEEEDAAEESNLASAERELYQRILEEWKAWRARSRRDLEQLRADLGREEVGQSVDHAKKLAEEATEEVQEWMEEIIEETEEVLA</sequence>
<protein>
    <recommendedName>
        <fullName evidence="1">Eukaryotic translation initiation factor 3 subunit B</fullName>
        <shortName evidence="1">eIF3b</shortName>
    </recommendedName>
    <alternativeName>
        <fullName evidence="1">Eukaryotic translation initiation factor 3 90 kDa subunit homolog</fullName>
        <shortName evidence="1">eIF3 p90</shortName>
    </alternativeName>
    <alternativeName>
        <fullName>Translation initiation factor eIF3 p90 subunit homolog</fullName>
    </alternativeName>
</protein>
<proteinExistence type="inferred from homology"/>
<keyword id="KW-0175">Coiled coil</keyword>
<keyword id="KW-0963">Cytoplasm</keyword>
<keyword id="KW-0396">Initiation factor</keyword>
<keyword id="KW-0648">Protein biosynthesis</keyword>
<keyword id="KW-1185">Reference proteome</keyword>
<keyword id="KW-0677">Repeat</keyword>
<keyword id="KW-0694">RNA-binding</keyword>
<keyword id="KW-0853">WD repeat</keyword>
<feature type="chain" id="PRO_0000363825" description="Eukaryotic translation initiation factor 3 subunit B">
    <location>
        <begin position="1"/>
        <end position="745"/>
    </location>
</feature>
<feature type="domain" description="RRM" evidence="1">
    <location>
        <begin position="41"/>
        <end position="129"/>
    </location>
</feature>
<feature type="repeat" description="WD 1">
    <location>
        <begin position="189"/>
        <end position="230"/>
    </location>
</feature>
<feature type="repeat" description="WD 2">
    <location>
        <begin position="251"/>
        <end position="293"/>
    </location>
</feature>
<feature type="repeat" description="WD 3">
    <location>
        <begin position="303"/>
        <end position="344"/>
    </location>
</feature>
<feature type="repeat" description="WD 4">
    <location>
        <begin position="580"/>
        <end position="625"/>
    </location>
</feature>
<feature type="coiled-coil region" evidence="1">
    <location>
        <begin position="644"/>
        <end position="745"/>
    </location>
</feature>